<dbReference type="EMBL" id="AF254416">
    <property type="protein sequence ID" value="AAF79959.1"/>
    <property type="molecule type" value="mRNA"/>
</dbReference>
<dbReference type="EMBL" id="BC026975">
    <property type="protein sequence ID" value="AAH26975.1"/>
    <property type="molecule type" value="mRNA"/>
</dbReference>
<dbReference type="EMBL" id="BC065154">
    <property type="protein sequence ID" value="AAH65154.1"/>
    <property type="molecule type" value="mRNA"/>
</dbReference>
<dbReference type="CCDS" id="CCDS19916.1"/>
<dbReference type="RefSeq" id="NP_001317595.1">
    <property type="nucleotide sequence ID" value="NM_001330666.1"/>
</dbReference>
<dbReference type="RefSeq" id="NP_001317596.1">
    <property type="nucleotide sequence ID" value="NM_001330667.1"/>
</dbReference>
<dbReference type="RefSeq" id="NP_659503.1">
    <property type="nucleotide sequence ID" value="NM_145066.5"/>
</dbReference>
<dbReference type="RefSeq" id="XP_006505221.1">
    <property type="nucleotide sequence ID" value="XM_006505158.3"/>
</dbReference>
<dbReference type="RefSeq" id="XP_011239381.1">
    <property type="nucleotide sequence ID" value="XM_011241079.4"/>
</dbReference>
<dbReference type="RefSeq" id="XP_017177194.1">
    <property type="nucleotide sequence ID" value="XM_017321705.3"/>
</dbReference>
<dbReference type="RefSeq" id="XP_030111387.1">
    <property type="nucleotide sequence ID" value="XM_030255527.2"/>
</dbReference>
<dbReference type="RefSeq" id="XP_030111388.1">
    <property type="nucleotide sequence ID" value="XM_030255528.2"/>
</dbReference>
<dbReference type="RefSeq" id="XP_030111389.1">
    <property type="nucleotide sequence ID" value="XM_030255529.2"/>
</dbReference>
<dbReference type="RefSeq" id="XP_030111390.1">
    <property type="nucleotide sequence ID" value="XM_030255530.2"/>
</dbReference>
<dbReference type="RefSeq" id="XP_036008151.1">
    <property type="nucleotide sequence ID" value="XM_036152258.1"/>
</dbReference>
<dbReference type="SMR" id="P60894"/>
<dbReference type="BioGRID" id="211078">
    <property type="interactions" value="2"/>
</dbReference>
<dbReference type="FunCoup" id="P60894">
    <property type="interactions" value="1518"/>
</dbReference>
<dbReference type="STRING" id="10090.ENSMUSP00000053837"/>
<dbReference type="GlyCosmos" id="P60894">
    <property type="glycosylation" value="3 sites, No reported glycans"/>
</dbReference>
<dbReference type="GlyGen" id="P60894">
    <property type="glycosylation" value="4 sites"/>
</dbReference>
<dbReference type="PhosphoSitePlus" id="P60894"/>
<dbReference type="PaxDb" id="10090-ENSMUSP00000053837"/>
<dbReference type="Antibodypedia" id="17381">
    <property type="antibodies" value="164 antibodies from 26 providers"/>
</dbReference>
<dbReference type="DNASU" id="64450"/>
<dbReference type="Ensembl" id="ENSMUST00000060442.14">
    <property type="protein sequence ID" value="ENSMUSP00000053837.8"/>
    <property type="gene ID" value="ENSMUSG00000048216.14"/>
</dbReference>
<dbReference type="Ensembl" id="ENSMUST00000115491.2">
    <property type="protein sequence ID" value="ENSMUSP00000111154.2"/>
    <property type="gene ID" value="ENSMUSG00000048216.14"/>
</dbReference>
<dbReference type="Ensembl" id="ENSMUST00000115492.2">
    <property type="protein sequence ID" value="ENSMUSP00000111155.2"/>
    <property type="gene ID" value="ENSMUSG00000048216.14"/>
</dbReference>
<dbReference type="GeneID" id="64450"/>
<dbReference type="KEGG" id="mmu:64450"/>
<dbReference type="UCSC" id="uc009ayr.1">
    <property type="organism name" value="mouse"/>
</dbReference>
<dbReference type="AGR" id="MGI:1927851"/>
<dbReference type="CTD" id="54329"/>
<dbReference type="MGI" id="MGI:1927851">
    <property type="gene designation" value="Gpr85"/>
</dbReference>
<dbReference type="VEuPathDB" id="HostDB:ENSMUSG00000048216"/>
<dbReference type="eggNOG" id="KOG3656">
    <property type="taxonomic scope" value="Eukaryota"/>
</dbReference>
<dbReference type="GeneTree" id="ENSGT00890000139436"/>
<dbReference type="HOGENOM" id="CLU_055518_0_0_1"/>
<dbReference type="InParanoid" id="P60894"/>
<dbReference type="OMA" id="WCPYLVA"/>
<dbReference type="OrthoDB" id="6129346at2759"/>
<dbReference type="PhylomeDB" id="P60894"/>
<dbReference type="TreeFam" id="TF331163"/>
<dbReference type="BioGRID-ORCS" id="64450">
    <property type="hits" value="4 hits in 77 CRISPR screens"/>
</dbReference>
<dbReference type="ChiTaRS" id="Gpr85">
    <property type="organism name" value="mouse"/>
</dbReference>
<dbReference type="PRO" id="PR:P60894"/>
<dbReference type="Proteomes" id="UP000000589">
    <property type="component" value="Chromosome 6"/>
</dbReference>
<dbReference type="RNAct" id="P60894">
    <property type="molecule type" value="protein"/>
</dbReference>
<dbReference type="Bgee" id="ENSMUSG00000048216">
    <property type="expression patterns" value="Expressed in barrel cortex and 212 other cell types or tissues"/>
</dbReference>
<dbReference type="ExpressionAtlas" id="P60894">
    <property type="expression patterns" value="baseline and differential"/>
</dbReference>
<dbReference type="GO" id="GO:0005783">
    <property type="term" value="C:endoplasmic reticulum"/>
    <property type="evidence" value="ECO:0000250"/>
    <property type="project" value="UniProtKB"/>
</dbReference>
<dbReference type="GO" id="GO:0005886">
    <property type="term" value="C:plasma membrane"/>
    <property type="evidence" value="ECO:0000247"/>
    <property type="project" value="MGI"/>
</dbReference>
<dbReference type="GO" id="GO:0004930">
    <property type="term" value="F:G protein-coupled receptor activity"/>
    <property type="evidence" value="ECO:0007669"/>
    <property type="project" value="UniProtKB-KW"/>
</dbReference>
<dbReference type="CDD" id="cd15218">
    <property type="entry name" value="7tmA_SREB2_GPR85"/>
    <property type="match status" value="1"/>
</dbReference>
<dbReference type="FunFam" id="1.20.1070.10:FF:000074">
    <property type="entry name" value="probable G-protein coupled receptor 173"/>
    <property type="match status" value="1"/>
</dbReference>
<dbReference type="Gene3D" id="1.20.1070.10">
    <property type="entry name" value="Rhodopsin 7-helix transmembrane proteins"/>
    <property type="match status" value="1"/>
</dbReference>
<dbReference type="InterPro" id="IPR051509">
    <property type="entry name" value="GPCR_Orphan/Phoenixin"/>
</dbReference>
<dbReference type="InterPro" id="IPR000276">
    <property type="entry name" value="GPCR_Rhodpsn"/>
</dbReference>
<dbReference type="InterPro" id="IPR017452">
    <property type="entry name" value="GPCR_Rhodpsn_7TM"/>
</dbReference>
<dbReference type="PANTHER" id="PTHR19268">
    <property type="entry name" value="G PROTEIN-COUPLED RECEPTOR"/>
    <property type="match status" value="1"/>
</dbReference>
<dbReference type="PANTHER" id="PTHR19268:SF7">
    <property type="entry name" value="G-PROTEIN COUPLED RECEPTOR 85-RELATED"/>
    <property type="match status" value="1"/>
</dbReference>
<dbReference type="Pfam" id="PF00001">
    <property type="entry name" value="7tm_1"/>
    <property type="match status" value="1"/>
</dbReference>
<dbReference type="PRINTS" id="PR00237">
    <property type="entry name" value="GPCRRHODOPSN"/>
</dbReference>
<dbReference type="SUPFAM" id="SSF81321">
    <property type="entry name" value="Family A G protein-coupled receptor-like"/>
    <property type="match status" value="1"/>
</dbReference>
<dbReference type="PROSITE" id="PS50262">
    <property type="entry name" value="G_PROTEIN_RECEP_F1_2"/>
    <property type="match status" value="1"/>
</dbReference>
<reference key="1">
    <citation type="journal article" date="2000" name="Biochim. Biophys. Acta">
        <title>The brain-specific G-protein coupled receptor GPR85 with identical protein sequence in man and mouse maps to human chromosome 7q31.</title>
        <authorList>
            <person name="Hellebrand S."/>
            <person name="Schaller H.C."/>
            <person name="Wittenberger T."/>
        </authorList>
    </citation>
    <scope>NUCLEOTIDE SEQUENCE [MRNA]</scope>
    <scope>TISSUE SPECIFICITY</scope>
    <source>
        <strain>CD-1</strain>
        <tissue>Fetal brain</tissue>
    </source>
</reference>
<reference key="2">
    <citation type="journal article" date="2004" name="Genome Res.">
        <title>The status, quality, and expansion of the NIH full-length cDNA project: the Mammalian Gene Collection (MGC).</title>
        <authorList>
            <consortium name="The MGC Project Team"/>
        </authorList>
    </citation>
    <scope>NUCLEOTIDE SEQUENCE [LARGE SCALE MRNA]</scope>
    <source>
        <strain>C57BL/6J</strain>
        <tissue>Brain</tissue>
        <tissue>Eye</tissue>
    </source>
</reference>
<proteinExistence type="evidence at transcript level"/>
<organism>
    <name type="scientific">Mus musculus</name>
    <name type="common">Mouse</name>
    <dbReference type="NCBI Taxonomy" id="10090"/>
    <lineage>
        <taxon>Eukaryota</taxon>
        <taxon>Metazoa</taxon>
        <taxon>Chordata</taxon>
        <taxon>Craniata</taxon>
        <taxon>Vertebrata</taxon>
        <taxon>Euteleostomi</taxon>
        <taxon>Mammalia</taxon>
        <taxon>Eutheria</taxon>
        <taxon>Euarchontoglires</taxon>
        <taxon>Glires</taxon>
        <taxon>Rodentia</taxon>
        <taxon>Myomorpha</taxon>
        <taxon>Muroidea</taxon>
        <taxon>Muridae</taxon>
        <taxon>Murinae</taxon>
        <taxon>Mus</taxon>
        <taxon>Mus</taxon>
    </lineage>
</organism>
<keyword id="KW-1003">Cell membrane</keyword>
<keyword id="KW-1015">Disulfide bond</keyword>
<keyword id="KW-0256">Endoplasmic reticulum</keyword>
<keyword id="KW-0297">G-protein coupled receptor</keyword>
<keyword id="KW-0325">Glycoprotein</keyword>
<keyword id="KW-0472">Membrane</keyword>
<keyword id="KW-0675">Receptor</keyword>
<keyword id="KW-1185">Reference proteome</keyword>
<keyword id="KW-0807">Transducer</keyword>
<keyword id="KW-0812">Transmembrane</keyword>
<keyword id="KW-1133">Transmembrane helix</keyword>
<protein>
    <recommendedName>
        <fullName>Probable G-protein coupled receptor 85</fullName>
    </recommendedName>
    <alternativeName>
        <fullName>Super conserved receptor expressed in brain 2</fullName>
    </alternativeName>
</protein>
<gene>
    <name type="primary">Gpr85</name>
    <name type="synonym">Sreb2</name>
</gene>
<accession>P60894</accession>
<accession>Q9JHI6</accession>
<accession>Q9NPD1</accession>
<evidence type="ECO:0000250" key="1"/>
<evidence type="ECO:0000250" key="2">
    <source>
        <dbReference type="UniProtKB" id="P60893"/>
    </source>
</evidence>
<evidence type="ECO:0000255" key="3"/>
<evidence type="ECO:0000255" key="4">
    <source>
        <dbReference type="PROSITE-ProRule" id="PRU00521"/>
    </source>
</evidence>
<evidence type="ECO:0000269" key="5">
    <source>
    </source>
</evidence>
<comment type="function">
    <text>Orphan receptor.</text>
</comment>
<comment type="subunit">
    <text evidence="2">Interacts with DLG4 and DLG3.</text>
</comment>
<comment type="subcellular location">
    <subcellularLocation>
        <location evidence="1">Cell membrane</location>
        <topology evidence="1">Multi-pass membrane protein</topology>
    </subcellularLocation>
    <subcellularLocation>
        <location evidence="2">Endoplasmic reticulum</location>
    </subcellularLocation>
</comment>
<comment type="tissue specificity">
    <text evidence="5">Exclusively expressed in brain.</text>
</comment>
<comment type="similarity">
    <text evidence="4">Belongs to the G-protein coupled receptor 1 family.</text>
</comment>
<name>GPR85_MOUSE</name>
<sequence length="370" mass="41995">MANYSHAADNILQNLSPLTAFLKLTSLGFIIGVSVVGNLLISILLVKDKTLHRAPYYFLLDLCCSDILRSAICFPFVFNSVKNGSTWTYGTLTCKVIAFLGVLSCFHTAFMLFCISVTRYLAIAHHRFYTKRLTFWTCLAVICMVWTLSVAMAFPPVLDVGTYSFIREEDQCTFQHRSFRANDSLGFMLLLALILLATQLVYLKLIFFVHDRRKMKPVQFVAAVSQNWTFHGPGASGQAAANWLAGFGRGPTPPTLLGIRQNANTTGRRRLLVLDEFKMEKRISRMFYIMTFLFLTLWGPYLVACYWRVFARGPVVPGGFLTAAVWMSFAQAGINPFVCIFSNRELRRCFSTTLLYCRKSRLPREPYCVI</sequence>
<feature type="chain" id="PRO_0000069592" description="Probable G-protein coupled receptor 85">
    <location>
        <begin position="1"/>
        <end position="370"/>
    </location>
</feature>
<feature type="topological domain" description="Extracellular" evidence="3">
    <location>
        <begin position="1"/>
        <end position="25"/>
    </location>
</feature>
<feature type="transmembrane region" description="Helical; Name=1" evidence="3">
    <location>
        <begin position="26"/>
        <end position="46"/>
    </location>
</feature>
<feature type="topological domain" description="Cytoplasmic" evidence="3">
    <location>
        <begin position="47"/>
        <end position="57"/>
    </location>
</feature>
<feature type="transmembrane region" description="Helical; Name=2" evidence="3">
    <location>
        <begin position="58"/>
        <end position="78"/>
    </location>
</feature>
<feature type="topological domain" description="Extracellular" evidence="3">
    <location>
        <begin position="79"/>
        <end position="96"/>
    </location>
</feature>
<feature type="transmembrane region" description="Helical; Name=3" evidence="3">
    <location>
        <begin position="97"/>
        <end position="117"/>
    </location>
</feature>
<feature type="topological domain" description="Cytoplasmic" evidence="3">
    <location>
        <begin position="118"/>
        <end position="137"/>
    </location>
</feature>
<feature type="transmembrane region" description="Helical; Name=4" evidence="3">
    <location>
        <begin position="138"/>
        <end position="158"/>
    </location>
</feature>
<feature type="topological domain" description="Extracellular" evidence="3">
    <location>
        <begin position="159"/>
        <end position="188"/>
    </location>
</feature>
<feature type="transmembrane region" description="Helical; Name=5" evidence="3">
    <location>
        <begin position="189"/>
        <end position="209"/>
    </location>
</feature>
<feature type="topological domain" description="Cytoplasmic" evidence="3">
    <location>
        <begin position="210"/>
        <end position="286"/>
    </location>
</feature>
<feature type="transmembrane region" description="Helical; Name=6" evidence="3">
    <location>
        <begin position="287"/>
        <end position="307"/>
    </location>
</feature>
<feature type="topological domain" description="Extracellular" evidence="3">
    <location>
        <begin position="308"/>
        <end position="313"/>
    </location>
</feature>
<feature type="transmembrane region" description="Helical; Name=7" evidence="3">
    <location>
        <begin position="314"/>
        <end position="334"/>
    </location>
</feature>
<feature type="topological domain" description="Cytoplasmic" evidence="3">
    <location>
        <begin position="335"/>
        <end position="370"/>
    </location>
</feature>
<feature type="glycosylation site" description="N-linked (GlcNAc...) asparagine" evidence="3">
    <location>
        <position position="3"/>
    </location>
</feature>
<feature type="glycosylation site" description="N-linked (GlcNAc...) asparagine" evidence="3">
    <location>
        <position position="83"/>
    </location>
</feature>
<feature type="glycosylation site" description="N-linked (GlcNAc...) asparagine" evidence="3">
    <location>
        <position position="182"/>
    </location>
</feature>
<feature type="disulfide bond" evidence="4">
    <location>
        <begin position="94"/>
        <end position="172"/>
    </location>
</feature>